<proteinExistence type="predicted"/>
<feature type="chain" id="PRO_0000310806" description="Uncharacterized PH domain-containing protein C19A8.02">
    <location>
        <begin position="1"/>
        <end position="1213"/>
    </location>
</feature>
<feature type="transmembrane region" description="Helical" evidence="1">
    <location>
        <begin position="996"/>
        <end position="1016"/>
    </location>
</feature>
<feature type="transmembrane region" description="Helical" evidence="1">
    <location>
        <begin position="1025"/>
        <end position="1045"/>
    </location>
</feature>
<feature type="domain" description="PH" evidence="2">
    <location>
        <begin position="289"/>
        <end position="390"/>
    </location>
</feature>
<feature type="domain" description="VASt" evidence="3">
    <location>
        <begin position="776"/>
        <end position="945"/>
    </location>
</feature>
<reference key="1">
    <citation type="journal article" date="2002" name="Nature">
        <title>The genome sequence of Schizosaccharomyces pombe.</title>
        <authorList>
            <person name="Wood V."/>
            <person name="Gwilliam R."/>
            <person name="Rajandream M.A."/>
            <person name="Lyne M.H."/>
            <person name="Lyne R."/>
            <person name="Stewart A."/>
            <person name="Sgouros J.G."/>
            <person name="Peat N."/>
            <person name="Hayles J."/>
            <person name="Baker S.G."/>
            <person name="Basham D."/>
            <person name="Bowman S."/>
            <person name="Brooks K."/>
            <person name="Brown D."/>
            <person name="Brown S."/>
            <person name="Chillingworth T."/>
            <person name="Churcher C.M."/>
            <person name="Collins M."/>
            <person name="Connor R."/>
            <person name="Cronin A."/>
            <person name="Davis P."/>
            <person name="Feltwell T."/>
            <person name="Fraser A."/>
            <person name="Gentles S."/>
            <person name="Goble A."/>
            <person name="Hamlin N."/>
            <person name="Harris D.E."/>
            <person name="Hidalgo J."/>
            <person name="Hodgson G."/>
            <person name="Holroyd S."/>
            <person name="Hornsby T."/>
            <person name="Howarth S."/>
            <person name="Huckle E.J."/>
            <person name="Hunt S."/>
            <person name="Jagels K."/>
            <person name="James K.D."/>
            <person name="Jones L."/>
            <person name="Jones M."/>
            <person name="Leather S."/>
            <person name="McDonald S."/>
            <person name="McLean J."/>
            <person name="Mooney P."/>
            <person name="Moule S."/>
            <person name="Mungall K.L."/>
            <person name="Murphy L.D."/>
            <person name="Niblett D."/>
            <person name="Odell C."/>
            <person name="Oliver K."/>
            <person name="O'Neil S."/>
            <person name="Pearson D."/>
            <person name="Quail M.A."/>
            <person name="Rabbinowitsch E."/>
            <person name="Rutherford K.M."/>
            <person name="Rutter S."/>
            <person name="Saunders D."/>
            <person name="Seeger K."/>
            <person name="Sharp S."/>
            <person name="Skelton J."/>
            <person name="Simmonds M.N."/>
            <person name="Squares R."/>
            <person name="Squares S."/>
            <person name="Stevens K."/>
            <person name="Taylor K."/>
            <person name="Taylor R.G."/>
            <person name="Tivey A."/>
            <person name="Walsh S.V."/>
            <person name="Warren T."/>
            <person name="Whitehead S."/>
            <person name="Woodward J.R."/>
            <person name="Volckaert G."/>
            <person name="Aert R."/>
            <person name="Robben J."/>
            <person name="Grymonprez B."/>
            <person name="Weltjens I."/>
            <person name="Vanstreels E."/>
            <person name="Rieger M."/>
            <person name="Schaefer M."/>
            <person name="Mueller-Auer S."/>
            <person name="Gabel C."/>
            <person name="Fuchs M."/>
            <person name="Duesterhoeft A."/>
            <person name="Fritzc C."/>
            <person name="Holzer E."/>
            <person name="Moestl D."/>
            <person name="Hilbert H."/>
            <person name="Borzym K."/>
            <person name="Langer I."/>
            <person name="Beck A."/>
            <person name="Lehrach H."/>
            <person name="Reinhardt R."/>
            <person name="Pohl T.M."/>
            <person name="Eger P."/>
            <person name="Zimmermann W."/>
            <person name="Wedler H."/>
            <person name="Wambutt R."/>
            <person name="Purnelle B."/>
            <person name="Goffeau A."/>
            <person name="Cadieu E."/>
            <person name="Dreano S."/>
            <person name="Gloux S."/>
            <person name="Lelaure V."/>
            <person name="Mottier S."/>
            <person name="Galibert F."/>
            <person name="Aves S.J."/>
            <person name="Xiang Z."/>
            <person name="Hunt C."/>
            <person name="Moore K."/>
            <person name="Hurst S.M."/>
            <person name="Lucas M."/>
            <person name="Rochet M."/>
            <person name="Gaillardin C."/>
            <person name="Tallada V.A."/>
            <person name="Garzon A."/>
            <person name="Thode G."/>
            <person name="Daga R.R."/>
            <person name="Cruzado L."/>
            <person name="Jimenez J."/>
            <person name="Sanchez M."/>
            <person name="del Rey F."/>
            <person name="Benito J."/>
            <person name="Dominguez A."/>
            <person name="Revuelta J.L."/>
            <person name="Moreno S."/>
            <person name="Armstrong J."/>
            <person name="Forsburg S.L."/>
            <person name="Cerutti L."/>
            <person name="Lowe T."/>
            <person name="McCombie W.R."/>
            <person name="Paulsen I."/>
            <person name="Potashkin J."/>
            <person name="Shpakovski G.V."/>
            <person name="Ussery D."/>
            <person name="Barrell B.G."/>
            <person name="Nurse P."/>
        </authorList>
    </citation>
    <scope>NUCLEOTIDE SEQUENCE [LARGE SCALE GENOMIC DNA]</scope>
    <source>
        <strain>972 / ATCC 24843</strain>
    </source>
</reference>
<reference key="2">
    <citation type="journal article" date="2000" name="Genes Cells">
        <title>Large-scale screening of intracellular protein localization in living fission yeast cells by the use of a GFP-fusion genomic DNA library.</title>
        <authorList>
            <person name="Ding D.-Q."/>
            <person name="Tomita Y."/>
            <person name="Yamamoto A."/>
            <person name="Chikashige Y."/>
            <person name="Haraguchi T."/>
            <person name="Hiraoka Y."/>
        </authorList>
    </citation>
    <scope>NUCLEOTIDE SEQUENCE [LARGE SCALE GENOMIC DNA] OF 492-726</scope>
    <scope>SUBCELLULAR LOCATION</scope>
    <source>
        <strain>ATCC 38364 / 968</strain>
    </source>
</reference>
<comment type="subcellular location">
    <subcellularLocation>
        <location evidence="4">Cytoplasm</location>
    </subcellularLocation>
    <subcellularLocation>
        <location evidence="4">Nucleus membrane</location>
        <topology evidence="4">Multi-pass membrane protein</topology>
    </subcellularLocation>
    <subcellularLocation>
        <location evidence="4">Cytoplasm</location>
        <location evidence="4">Cytoskeleton</location>
        <location evidence="4">Microtubule organizing center</location>
        <location evidence="4">Spindle pole body</location>
    </subcellularLocation>
</comment>
<sequence length="1213" mass="140562">MAAPANASSKKDHVIPVLLNECSIDSPSFRASMYYLGNQIKAFNEWSHDFLCCCNKFIESIMAIEPIVASMSLNAMPSNVASGFFDPDYATTALLHGQDLFRSSYMVQLQQAKNLRKFIVAPLDLFRDSKVKPLLQLNDRFKAEQAKYDAEVLRYSSLGHSKDLSQMRDEAKSLYEARKSYFTVALQYVVRVTSFRSSIDFIVIESICKFSIETFRLTDRLHESNRHINDQLIRLLSYETKLKESYPSLKRIVSNVFDRIEKEILKRVQPPTNLDAYRFDPQQICQTNATKRQGWLLRNISSSKADNKAIWRKYWFFVDNGYVGYLINDANGGVFESEKIGVLLCKFSVLPSNHRKFCFQIKTKSVSYILQAETHMEMLEWGSVINNAREHCINSGISANRILSPTLPSFSAKATSIINPQVNGRSNSTGKIGKNYRPRRTYSGRLLCGPNNYEVSTIMRSPTISTVPPPKYLSNSINGAKFLNPLAPWTLVNAPLITNLTHETITSLLDQEAFFHGNSPCALLANFWGSVNYGHVLERQNVYIEDLSNPSYKRLAREIHIEKLPSELKLRNAEFRGIFGESEASTVLFVCRVCSKREDQIRMPGRMYCTMKGIYIYYNINGLVLIEHFPISSILNVKQFASTKCDYFYMNIQNIGTVRFRLYLDSSKALTDRLNVLLCNYIADKPNSSIQLLSCIKRLNDDVKRFERGGDDNALKSYGVQPSQEDLLIRRGRSSRALTNLINKNESNDSFMEDLRDFKIAMLPKETVQVVRSHHLDDIVFDRVYNVSTKALFHIVFGDRSTVLSGAYNLHGVDDVEFLPWGKDPKTNLSRRYINYKVYNYDQEGQCQSYHYEDCQIMDVRNDYHLYIMTWLHHSWTLPYRDYFKIVTKTSISHLRREKSRLLISVGLEWIVKPFAISKVIEAECRKLAIKYIKTEVNFLEKATRRARNQPLIAIINQYGRVGDYNESMVYRRKIPFNCELKNLSIIDIIRNNWWLFLQGLAIDLLKLPWAVFHIFLRYLFSHSFLVIIFACSVILNLSLMFCFGAKYWDERQNNKFVGQVFDEFKNIETSARYVYMKDVDDLLVGLPTYLHPNVTYPSECLQSFALKSSPQKSHWLRKRNYIAEKRKKILENLASLNYYEYIIHEDAVYQYIQQELLGCDKAREFDLYPPSMQRYCDSCTQDWRNRTLFFGKDTLATRLLTLETVENADYAA</sequence>
<accession>O13818</accession>
<accession>Q9USA8</accession>
<evidence type="ECO:0000255" key="1"/>
<evidence type="ECO:0000255" key="2">
    <source>
        <dbReference type="PROSITE-ProRule" id="PRU00145"/>
    </source>
</evidence>
<evidence type="ECO:0000255" key="3">
    <source>
        <dbReference type="PROSITE-ProRule" id="PRU01114"/>
    </source>
</evidence>
<evidence type="ECO:0000269" key="4">
    <source>
    </source>
</evidence>
<gene>
    <name type="ORF">SPAC19A8.02</name>
</gene>
<protein>
    <recommendedName>
        <fullName>Uncharacterized PH domain-containing protein C19A8.02</fullName>
    </recommendedName>
</protein>
<organism>
    <name type="scientific">Schizosaccharomyces pombe (strain 972 / ATCC 24843)</name>
    <name type="common">Fission yeast</name>
    <dbReference type="NCBI Taxonomy" id="284812"/>
    <lineage>
        <taxon>Eukaryota</taxon>
        <taxon>Fungi</taxon>
        <taxon>Dikarya</taxon>
        <taxon>Ascomycota</taxon>
        <taxon>Taphrinomycotina</taxon>
        <taxon>Schizosaccharomycetes</taxon>
        <taxon>Schizosaccharomycetales</taxon>
        <taxon>Schizosaccharomycetaceae</taxon>
        <taxon>Schizosaccharomyces</taxon>
    </lineage>
</organism>
<keyword id="KW-0963">Cytoplasm</keyword>
<keyword id="KW-0206">Cytoskeleton</keyword>
<keyword id="KW-0472">Membrane</keyword>
<keyword id="KW-0539">Nucleus</keyword>
<keyword id="KW-1185">Reference proteome</keyword>
<keyword id="KW-0812">Transmembrane</keyword>
<keyword id="KW-1133">Transmembrane helix</keyword>
<name>YEE2_SCHPO</name>
<dbReference type="EMBL" id="CU329670">
    <property type="protein sequence ID" value="CAB11638.1"/>
    <property type="molecule type" value="Genomic_DNA"/>
</dbReference>
<dbReference type="EMBL" id="AB027907">
    <property type="protein sequence ID" value="BAA87211.1"/>
    <property type="molecule type" value="Genomic_DNA"/>
</dbReference>
<dbReference type="PIR" id="T37959">
    <property type="entry name" value="T37959"/>
</dbReference>
<dbReference type="SMR" id="O13818"/>
<dbReference type="BioGRID" id="278690">
    <property type="interactions" value="6"/>
</dbReference>
<dbReference type="FunCoup" id="O13818">
    <property type="interactions" value="49"/>
</dbReference>
<dbReference type="iPTMnet" id="O13818"/>
<dbReference type="PaxDb" id="4896-SPAC19A8.02.1"/>
<dbReference type="EnsemblFungi" id="SPAC19A8.02.1">
    <property type="protein sequence ID" value="SPAC19A8.02.1:pep"/>
    <property type="gene ID" value="SPAC19A8.02"/>
</dbReference>
<dbReference type="KEGG" id="spo:2542216"/>
<dbReference type="PomBase" id="SPAC19A8.02"/>
<dbReference type="VEuPathDB" id="FungiDB:SPAC19A8.02"/>
<dbReference type="eggNOG" id="ENOG502QU87">
    <property type="taxonomic scope" value="Eukaryota"/>
</dbReference>
<dbReference type="HOGENOM" id="CLU_001720_0_0_1"/>
<dbReference type="InParanoid" id="O13818"/>
<dbReference type="OMA" id="TKVEWLW"/>
<dbReference type="PhylomeDB" id="O13818"/>
<dbReference type="PRO" id="PR:O13818"/>
<dbReference type="Proteomes" id="UP000002485">
    <property type="component" value="Chromosome I"/>
</dbReference>
<dbReference type="GO" id="GO:0032541">
    <property type="term" value="C:cortical endoplasmic reticulum"/>
    <property type="evidence" value="ECO:0000314"/>
    <property type="project" value="PomBase"/>
</dbReference>
<dbReference type="GO" id="GO:0005783">
    <property type="term" value="C:endoplasmic reticulum"/>
    <property type="evidence" value="ECO:0000318"/>
    <property type="project" value="GO_Central"/>
</dbReference>
<dbReference type="GO" id="GO:0140268">
    <property type="term" value="C:endoplasmic reticulum-plasma membrane contact site"/>
    <property type="evidence" value="ECO:0000314"/>
    <property type="project" value="PomBase"/>
</dbReference>
<dbReference type="GO" id="GO:0016328">
    <property type="term" value="C:lateral plasma membrane"/>
    <property type="evidence" value="ECO:0000314"/>
    <property type="project" value="PomBase"/>
</dbReference>
<dbReference type="GO" id="GO:0031965">
    <property type="term" value="C:nuclear membrane"/>
    <property type="evidence" value="ECO:0007669"/>
    <property type="project" value="UniProtKB-SubCell"/>
</dbReference>
<dbReference type="GO" id="GO:0005886">
    <property type="term" value="C:plasma membrane"/>
    <property type="evidence" value="ECO:0000318"/>
    <property type="project" value="GO_Central"/>
</dbReference>
<dbReference type="GO" id="GO:0005816">
    <property type="term" value="C:spindle pole body"/>
    <property type="evidence" value="ECO:0007669"/>
    <property type="project" value="UniProtKB-SubCell"/>
</dbReference>
<dbReference type="GO" id="GO:0008289">
    <property type="term" value="F:lipid binding"/>
    <property type="evidence" value="ECO:0000255"/>
    <property type="project" value="PomBase"/>
</dbReference>
<dbReference type="GO" id="GO:0061817">
    <property type="term" value="P:endoplasmic reticulum-plasma membrane tethering"/>
    <property type="evidence" value="ECO:0000266"/>
    <property type="project" value="PomBase"/>
</dbReference>
<dbReference type="CDD" id="cd07609">
    <property type="entry name" value="BAR_SIP3_fungi"/>
    <property type="match status" value="1"/>
</dbReference>
<dbReference type="CDD" id="cd13280">
    <property type="entry name" value="PH_SIP3"/>
    <property type="match status" value="1"/>
</dbReference>
<dbReference type="Gene3D" id="1.20.1270.60">
    <property type="entry name" value="Arfaptin homology (AH) domain/BAR domain"/>
    <property type="match status" value="1"/>
</dbReference>
<dbReference type="Gene3D" id="2.30.29.30">
    <property type="entry name" value="Pleckstrin-homology domain (PH domain)/Phosphotyrosine-binding domain (PTB)"/>
    <property type="match status" value="1"/>
</dbReference>
<dbReference type="InterPro" id="IPR027267">
    <property type="entry name" value="AH/BAR_dom_sf"/>
</dbReference>
<dbReference type="InterPro" id="IPR004148">
    <property type="entry name" value="BAR_dom"/>
</dbReference>
<dbReference type="InterPro" id="IPR011993">
    <property type="entry name" value="PH-like_dom_sf"/>
</dbReference>
<dbReference type="InterPro" id="IPR001849">
    <property type="entry name" value="PH_domain"/>
</dbReference>
<dbReference type="InterPro" id="IPR039463">
    <property type="entry name" value="Sip3/Lam1_BAR"/>
</dbReference>
<dbReference type="InterPro" id="IPR042067">
    <property type="entry name" value="Sip3_PH"/>
</dbReference>
<dbReference type="InterPro" id="IPR031968">
    <property type="entry name" value="VASt"/>
</dbReference>
<dbReference type="PANTHER" id="PTHR14248">
    <property type="entry name" value="CYCLIN Y, ISOFORM A"/>
    <property type="match status" value="1"/>
</dbReference>
<dbReference type="Pfam" id="PF16746">
    <property type="entry name" value="BAR_3"/>
    <property type="match status" value="1"/>
</dbReference>
<dbReference type="Pfam" id="PF00169">
    <property type="entry name" value="PH"/>
    <property type="match status" value="1"/>
</dbReference>
<dbReference type="Pfam" id="PF16016">
    <property type="entry name" value="VASt"/>
    <property type="match status" value="1"/>
</dbReference>
<dbReference type="SMART" id="SM00233">
    <property type="entry name" value="PH"/>
    <property type="match status" value="1"/>
</dbReference>
<dbReference type="SUPFAM" id="SSF103657">
    <property type="entry name" value="BAR/IMD domain-like"/>
    <property type="match status" value="1"/>
</dbReference>
<dbReference type="SUPFAM" id="SSF50729">
    <property type="entry name" value="PH domain-like"/>
    <property type="match status" value="1"/>
</dbReference>
<dbReference type="PROSITE" id="PS50003">
    <property type="entry name" value="PH_DOMAIN"/>
    <property type="match status" value="1"/>
</dbReference>
<dbReference type="PROSITE" id="PS51778">
    <property type="entry name" value="VAST"/>
    <property type="match status" value="1"/>
</dbReference>